<evidence type="ECO:0000250" key="1"/>
<evidence type="ECO:0000255" key="2">
    <source>
        <dbReference type="PROSITE-ProRule" id="PRU10009"/>
    </source>
</evidence>
<evidence type="ECO:0000269" key="3">
    <source>
    </source>
</evidence>
<evidence type="ECO:0000269" key="4">
    <source>
    </source>
</evidence>
<evidence type="ECO:0000305" key="5"/>
<evidence type="ECO:0007829" key="6">
    <source>
        <dbReference type="PDB" id="1GPD"/>
    </source>
</evidence>
<evidence type="ECO:0007829" key="7">
    <source>
        <dbReference type="PDB" id="4GPD"/>
    </source>
</evidence>
<accession>P00357</accession>
<dbReference type="EC" id="1.2.1.12"/>
<dbReference type="PIR" id="A00369">
    <property type="entry name" value="DELOG3"/>
</dbReference>
<dbReference type="PDB" id="1GPD">
    <property type="method" value="X-ray"/>
    <property type="resolution" value="2.90 A"/>
    <property type="chains" value="G/R=1-333"/>
</dbReference>
<dbReference type="PDB" id="4GPD">
    <property type="method" value="X-ray"/>
    <property type="resolution" value="2.80 A"/>
    <property type="chains" value="1/2/3/4=1-333"/>
</dbReference>
<dbReference type="PDBsum" id="1GPD"/>
<dbReference type="PDBsum" id="4GPD"/>
<dbReference type="SMR" id="P00357"/>
<dbReference type="iPTMnet" id="P00357"/>
<dbReference type="OrthoDB" id="1152826at2759"/>
<dbReference type="UniPathway" id="UPA00109">
    <property type="reaction ID" value="UER00184"/>
</dbReference>
<dbReference type="EvolutionaryTrace" id="P00357"/>
<dbReference type="GO" id="GO:0005829">
    <property type="term" value="C:cytosol"/>
    <property type="evidence" value="ECO:0007669"/>
    <property type="project" value="TreeGrafter"/>
</dbReference>
<dbReference type="GO" id="GO:0004365">
    <property type="term" value="F:glyceraldehyde-3-phosphate dehydrogenase (NAD+) (phosphorylating) activity"/>
    <property type="evidence" value="ECO:0007669"/>
    <property type="project" value="UniProtKB-EC"/>
</dbReference>
<dbReference type="GO" id="GO:0051287">
    <property type="term" value="F:NAD binding"/>
    <property type="evidence" value="ECO:0007669"/>
    <property type="project" value="InterPro"/>
</dbReference>
<dbReference type="GO" id="GO:0050661">
    <property type="term" value="F:NADP binding"/>
    <property type="evidence" value="ECO:0007669"/>
    <property type="project" value="InterPro"/>
</dbReference>
<dbReference type="GO" id="GO:0006006">
    <property type="term" value="P:glucose metabolic process"/>
    <property type="evidence" value="ECO:0007669"/>
    <property type="project" value="InterPro"/>
</dbReference>
<dbReference type="GO" id="GO:0006096">
    <property type="term" value="P:glycolytic process"/>
    <property type="evidence" value="ECO:0007669"/>
    <property type="project" value="UniProtKB-UniPathway"/>
</dbReference>
<dbReference type="CDD" id="cd18126">
    <property type="entry name" value="GAPDH_I_C"/>
    <property type="match status" value="1"/>
</dbReference>
<dbReference type="CDD" id="cd05214">
    <property type="entry name" value="GAPDH_I_N"/>
    <property type="match status" value="1"/>
</dbReference>
<dbReference type="FunFam" id="3.30.360.10:FF:000001">
    <property type="entry name" value="Glyceraldehyde-3-phosphate dehydrogenase"/>
    <property type="match status" value="1"/>
</dbReference>
<dbReference type="FunFam" id="3.40.50.720:FF:000266">
    <property type="entry name" value="Glyceraldehyde-3-phosphate dehydrogenase"/>
    <property type="match status" value="1"/>
</dbReference>
<dbReference type="Gene3D" id="3.30.360.10">
    <property type="entry name" value="Dihydrodipicolinate Reductase, domain 2"/>
    <property type="match status" value="1"/>
</dbReference>
<dbReference type="Gene3D" id="3.40.50.720">
    <property type="entry name" value="NAD(P)-binding Rossmann-like Domain"/>
    <property type="match status" value="1"/>
</dbReference>
<dbReference type="InterPro" id="IPR020831">
    <property type="entry name" value="GlycerAld/Erythrose_P_DH"/>
</dbReference>
<dbReference type="InterPro" id="IPR020830">
    <property type="entry name" value="GlycerAld_3-P_DH_AS"/>
</dbReference>
<dbReference type="InterPro" id="IPR020829">
    <property type="entry name" value="GlycerAld_3-P_DH_cat"/>
</dbReference>
<dbReference type="InterPro" id="IPR020828">
    <property type="entry name" value="GlycerAld_3-P_DH_NAD(P)-bd"/>
</dbReference>
<dbReference type="InterPro" id="IPR006424">
    <property type="entry name" value="Glyceraldehyde-3-P_DH_1"/>
</dbReference>
<dbReference type="InterPro" id="IPR036291">
    <property type="entry name" value="NAD(P)-bd_dom_sf"/>
</dbReference>
<dbReference type="NCBIfam" id="TIGR01534">
    <property type="entry name" value="GAPDH-I"/>
    <property type="match status" value="1"/>
</dbReference>
<dbReference type="PANTHER" id="PTHR10836">
    <property type="entry name" value="GLYCERALDEHYDE 3-PHOSPHATE DEHYDROGENASE"/>
    <property type="match status" value="1"/>
</dbReference>
<dbReference type="PANTHER" id="PTHR10836:SF76">
    <property type="entry name" value="GLYCERALDEHYDE-3-PHOSPHATE DEHYDROGENASE-RELATED"/>
    <property type="match status" value="1"/>
</dbReference>
<dbReference type="Pfam" id="PF02800">
    <property type="entry name" value="Gp_dh_C"/>
    <property type="match status" value="1"/>
</dbReference>
<dbReference type="Pfam" id="PF00044">
    <property type="entry name" value="Gp_dh_N"/>
    <property type="match status" value="1"/>
</dbReference>
<dbReference type="PIRSF" id="PIRSF000149">
    <property type="entry name" value="GAP_DH"/>
    <property type="match status" value="1"/>
</dbReference>
<dbReference type="PRINTS" id="PR00078">
    <property type="entry name" value="G3PDHDRGNASE"/>
</dbReference>
<dbReference type="SMART" id="SM00846">
    <property type="entry name" value="Gp_dh_N"/>
    <property type="match status" value="1"/>
</dbReference>
<dbReference type="SUPFAM" id="SSF55347">
    <property type="entry name" value="Glyceraldehyde-3-phosphate dehydrogenase-like, C-terminal domain"/>
    <property type="match status" value="1"/>
</dbReference>
<dbReference type="SUPFAM" id="SSF51735">
    <property type="entry name" value="NAD(P)-binding Rossmann-fold domains"/>
    <property type="match status" value="1"/>
</dbReference>
<dbReference type="PROSITE" id="PS00071">
    <property type="entry name" value="GAPDH"/>
    <property type="match status" value="1"/>
</dbReference>
<protein>
    <recommendedName>
        <fullName>Glyceraldehyde-3-phosphate dehydrogenase</fullName>
        <shortName>GAPDH</shortName>
        <ecNumber>1.2.1.12</ecNumber>
    </recommendedName>
</protein>
<name>G3P_HOMAM</name>
<sequence length="333" mass="35716">SKIGINGFGRIGRLVLRAALSCGAQVVAVNDPFIALEYMVYMFKYDSTHGVFKGEVKMEDGALVVDGKKITVFNEMKPENIPWSKAGAEYIVESTGVFTTIEKASAHFKGGAKKVVISAPSADAPMFVCGVNLEKYSKDMTVVSNASCTTNCLAPVAKVLHENFEIVEGLMTTVHAVTATQKTVDGPSAKDWRGGRGAAQNIIPSSTGAAKAVGKVIPELDGKLTGMAFRVPTPDVSVVDLTVRLGKECSYDDIKAAMKTASEGPLQGFLGYTEDDVVSSDFIGDNRSSIFDAKAGIQLSKTFVKVVSWYDNEFGYSQRVIDLLKHMQKVDSA</sequence>
<reference key="1">
    <citation type="journal article" date="1967" name="Nature">
        <title>Amino-acid sequence of glyceraldehyde 3-phosphate dehydrogenase from lobster muscle.</title>
        <authorList>
            <person name="Davidson B.E."/>
            <person name="Sajgo M."/>
            <person name="Noller H.F."/>
            <person name="Harris J.I."/>
        </authorList>
    </citation>
    <scope>PROTEIN SEQUENCE</scope>
    <scope>ACETYLATION AT SER-1</scope>
</reference>
<reference key="2">
    <citation type="journal article" date="1975" name="J. Biol. Chem.">
        <title>Studies of asymmetry in the three-dimensional structure of lobster D-glyceraldehyde-3-phosphate dehydrogenase.</title>
        <authorList>
            <person name="Moras D."/>
            <person name="Olsen K.W."/>
            <person name="Sabesan M.N."/>
            <person name="Buehner M."/>
            <person name="Ford G.C."/>
            <person name="Rossmann M.G."/>
        </authorList>
    </citation>
    <scope>X-RAY CRYSTALLOGRAPHY (2.9 ANGSTROMS) IN COMPLEX WITH NAD AND INORGANIC PHOSPHATE</scope>
    <scope>SUBUNIT</scope>
    <scope>SEQUENCE REVISION TO 6</scope>
</reference>
<comment type="catalytic activity">
    <reaction evidence="2">
        <text>D-glyceraldehyde 3-phosphate + phosphate + NAD(+) = (2R)-3-phospho-glyceroyl phosphate + NADH + H(+)</text>
        <dbReference type="Rhea" id="RHEA:10300"/>
        <dbReference type="ChEBI" id="CHEBI:15378"/>
        <dbReference type="ChEBI" id="CHEBI:43474"/>
        <dbReference type="ChEBI" id="CHEBI:57540"/>
        <dbReference type="ChEBI" id="CHEBI:57604"/>
        <dbReference type="ChEBI" id="CHEBI:57945"/>
        <dbReference type="ChEBI" id="CHEBI:59776"/>
        <dbReference type="EC" id="1.2.1.12"/>
    </reaction>
</comment>
<comment type="pathway">
    <text>Carbohydrate degradation; glycolysis; pyruvate from D-glyceraldehyde 3-phosphate: step 1/5.</text>
</comment>
<comment type="subunit">
    <text evidence="3">Homotetramer.</text>
</comment>
<comment type="subcellular location">
    <subcellularLocation>
        <location>Cytoplasm</location>
    </subcellularLocation>
</comment>
<comment type="similarity">
    <text evidence="5">Belongs to the glyceraldehyde-3-phosphate dehydrogenase family.</text>
</comment>
<proteinExistence type="evidence at protein level"/>
<keyword id="KW-0002">3D-structure</keyword>
<keyword id="KW-0007">Acetylation</keyword>
<keyword id="KW-0963">Cytoplasm</keyword>
<keyword id="KW-0903">Direct protein sequencing</keyword>
<keyword id="KW-0324">Glycolysis</keyword>
<keyword id="KW-0520">NAD</keyword>
<keyword id="KW-0560">Oxidoreductase</keyword>
<feature type="chain" id="PRO_0000145505" description="Glyceraldehyde-3-phosphate dehydrogenase">
    <location>
        <begin position="1"/>
        <end position="333"/>
    </location>
</feature>
<feature type="active site" description="Nucleophile">
    <location>
        <position position="148"/>
    </location>
</feature>
<feature type="binding site" evidence="3">
    <location>
        <begin position="10"/>
        <end position="11"/>
    </location>
    <ligand>
        <name>NAD(+)</name>
        <dbReference type="ChEBI" id="CHEBI:57540"/>
    </ligand>
</feature>
<feature type="binding site" evidence="3">
    <location>
        <position position="31"/>
    </location>
    <ligand>
        <name>NAD(+)</name>
        <dbReference type="ChEBI" id="CHEBI:57540"/>
    </ligand>
</feature>
<feature type="binding site" evidence="3">
    <location>
        <position position="118"/>
    </location>
    <ligand>
        <name>NAD(+)</name>
        <dbReference type="ChEBI" id="CHEBI:57540"/>
    </ligand>
</feature>
<feature type="binding site" evidence="1">
    <location>
        <begin position="147"/>
        <end position="149"/>
    </location>
    <ligand>
        <name>D-glyceraldehyde 3-phosphate</name>
        <dbReference type="ChEBI" id="CHEBI:59776"/>
    </ligand>
</feature>
<feature type="binding site" evidence="1">
    <location>
        <position position="178"/>
    </location>
    <ligand>
        <name>D-glyceraldehyde 3-phosphate</name>
        <dbReference type="ChEBI" id="CHEBI:59776"/>
    </ligand>
</feature>
<feature type="binding site" evidence="1">
    <location>
        <begin position="207"/>
        <end position="208"/>
    </location>
    <ligand>
        <name>D-glyceraldehyde 3-phosphate</name>
        <dbReference type="ChEBI" id="CHEBI:59776"/>
    </ligand>
</feature>
<feature type="binding site" evidence="1">
    <location>
        <position position="230"/>
    </location>
    <ligand>
        <name>D-glyceraldehyde 3-phosphate</name>
        <dbReference type="ChEBI" id="CHEBI:59776"/>
    </ligand>
</feature>
<feature type="binding site" evidence="3">
    <location>
        <position position="312"/>
    </location>
    <ligand>
        <name>NAD(+)</name>
        <dbReference type="ChEBI" id="CHEBI:57540"/>
    </ligand>
</feature>
<feature type="site" description="Activates thiol group during catalysis">
    <location>
        <position position="175"/>
    </location>
</feature>
<feature type="modified residue" description="N-acetylserine" evidence="4">
    <location>
        <position position="1"/>
    </location>
</feature>
<feature type="sequence conflict" description="In Ref. 1; AA sequence." evidence="5" ref="1">
    <original>N</original>
    <variation>D</variation>
    <location>
        <position position="6"/>
    </location>
</feature>
<feature type="strand" evidence="6">
    <location>
        <begin position="3"/>
        <end position="6"/>
    </location>
</feature>
<feature type="helix" evidence="7">
    <location>
        <begin position="10"/>
        <end position="14"/>
    </location>
</feature>
<feature type="helix" evidence="7">
    <location>
        <begin position="16"/>
        <end position="19"/>
    </location>
</feature>
<feature type="turn" evidence="7">
    <location>
        <begin position="20"/>
        <end position="23"/>
    </location>
</feature>
<feature type="helix" evidence="7">
    <location>
        <begin position="36"/>
        <end position="44"/>
    </location>
</feature>
<feature type="strand" evidence="7">
    <location>
        <begin position="47"/>
        <end position="49"/>
    </location>
</feature>
<feature type="strand" evidence="7">
    <location>
        <begin position="56"/>
        <end position="59"/>
    </location>
</feature>
<feature type="strand" evidence="7">
    <location>
        <begin position="62"/>
        <end position="67"/>
    </location>
</feature>
<feature type="strand" evidence="6">
    <location>
        <begin position="68"/>
        <end position="70"/>
    </location>
</feature>
<feature type="helix" evidence="7">
    <location>
        <begin position="78"/>
        <end position="80"/>
    </location>
</feature>
<feature type="turn" evidence="7">
    <location>
        <begin position="84"/>
        <end position="87"/>
    </location>
</feature>
<feature type="strand" evidence="7">
    <location>
        <begin position="90"/>
        <end position="93"/>
    </location>
</feature>
<feature type="strand" evidence="7">
    <location>
        <begin position="95"/>
        <end position="97"/>
    </location>
</feature>
<feature type="helix" evidence="7">
    <location>
        <begin position="101"/>
        <end position="105"/>
    </location>
</feature>
<feature type="helix" evidence="7">
    <location>
        <begin position="106"/>
        <end position="110"/>
    </location>
</feature>
<feature type="strand" evidence="7">
    <location>
        <begin position="114"/>
        <end position="119"/>
    </location>
</feature>
<feature type="strand" evidence="7">
    <location>
        <begin position="122"/>
        <end position="124"/>
    </location>
</feature>
<feature type="helix" evidence="7">
    <location>
        <begin position="129"/>
        <end position="135"/>
    </location>
</feature>
<feature type="strand" evidence="6">
    <location>
        <begin position="141"/>
        <end position="145"/>
    </location>
</feature>
<feature type="helix" evidence="7">
    <location>
        <begin position="148"/>
        <end position="164"/>
    </location>
</feature>
<feature type="strand" evidence="7">
    <location>
        <begin position="165"/>
        <end position="176"/>
    </location>
</feature>
<feature type="strand" evidence="7">
    <location>
        <begin position="179"/>
        <end position="181"/>
    </location>
</feature>
<feature type="helix" evidence="7">
    <location>
        <begin position="192"/>
        <end position="194"/>
    </location>
</feature>
<feature type="strand" evidence="6">
    <location>
        <begin position="197"/>
        <end position="200"/>
    </location>
</feature>
<feature type="strand" evidence="6">
    <location>
        <begin position="203"/>
        <end position="207"/>
    </location>
</feature>
<feature type="helix" evidence="7">
    <location>
        <begin position="209"/>
        <end position="214"/>
    </location>
</feature>
<feature type="strand" evidence="6">
    <location>
        <begin position="217"/>
        <end position="223"/>
    </location>
</feature>
<feature type="strand" evidence="7">
    <location>
        <begin position="227"/>
        <end position="232"/>
    </location>
</feature>
<feature type="strand" evidence="7">
    <location>
        <begin position="237"/>
        <end position="247"/>
    </location>
</feature>
<feature type="helix" evidence="7">
    <location>
        <begin position="251"/>
        <end position="263"/>
    </location>
</feature>
<feature type="turn" evidence="7">
    <location>
        <begin position="264"/>
        <end position="269"/>
    </location>
</feature>
<feature type="strand" evidence="6">
    <location>
        <begin position="283"/>
        <end position="285"/>
    </location>
</feature>
<feature type="strand" evidence="7">
    <location>
        <begin position="288"/>
        <end position="292"/>
    </location>
</feature>
<feature type="strand" evidence="7">
    <location>
        <begin position="298"/>
        <end position="300"/>
    </location>
</feature>
<feature type="strand" evidence="7">
    <location>
        <begin position="303"/>
        <end position="309"/>
    </location>
</feature>
<feature type="helix" evidence="7">
    <location>
        <begin position="314"/>
        <end position="331"/>
    </location>
</feature>
<organism>
    <name type="scientific">Homarus americanus</name>
    <name type="common">American lobster</name>
    <dbReference type="NCBI Taxonomy" id="6706"/>
    <lineage>
        <taxon>Eukaryota</taxon>
        <taxon>Metazoa</taxon>
        <taxon>Ecdysozoa</taxon>
        <taxon>Arthropoda</taxon>
        <taxon>Crustacea</taxon>
        <taxon>Multicrustacea</taxon>
        <taxon>Malacostraca</taxon>
        <taxon>Eumalacostraca</taxon>
        <taxon>Eucarida</taxon>
        <taxon>Decapoda</taxon>
        <taxon>Pleocyemata</taxon>
        <taxon>Astacidea</taxon>
        <taxon>Nephropoidea</taxon>
        <taxon>Nephropidae</taxon>
        <taxon>Homarus</taxon>
    </lineage>
</organism>